<name>PROA_CERS4</name>
<dbReference type="EC" id="1.2.1.41" evidence="1"/>
<dbReference type="EMBL" id="CP000144">
    <property type="protein sequence ID" value="ABA80607.1"/>
    <property type="molecule type" value="Genomic_DNA"/>
</dbReference>
<dbReference type="RefSeq" id="WP_011338953.1">
    <property type="nucleotide sequence ID" value="NC_007494.2"/>
</dbReference>
<dbReference type="RefSeq" id="YP_354508.1">
    <property type="nucleotide sequence ID" value="NC_007494.2"/>
</dbReference>
<dbReference type="SMR" id="Q3IXX7"/>
<dbReference type="STRING" id="272943.RSP_3824"/>
<dbReference type="EnsemblBacteria" id="ABA80607">
    <property type="protein sequence ID" value="ABA80607"/>
    <property type="gene ID" value="RSP_3824"/>
</dbReference>
<dbReference type="GeneID" id="3721405"/>
<dbReference type="KEGG" id="rsp:RSP_3824"/>
<dbReference type="PATRIC" id="fig|272943.9.peg.3410"/>
<dbReference type="eggNOG" id="COG0014">
    <property type="taxonomic scope" value="Bacteria"/>
</dbReference>
<dbReference type="OrthoDB" id="9809970at2"/>
<dbReference type="PhylomeDB" id="Q3IXX7"/>
<dbReference type="UniPathway" id="UPA00098">
    <property type="reaction ID" value="UER00360"/>
</dbReference>
<dbReference type="Proteomes" id="UP000002703">
    <property type="component" value="Chromosome 2"/>
</dbReference>
<dbReference type="GO" id="GO:0005737">
    <property type="term" value="C:cytoplasm"/>
    <property type="evidence" value="ECO:0007669"/>
    <property type="project" value="UniProtKB-SubCell"/>
</dbReference>
<dbReference type="GO" id="GO:0004350">
    <property type="term" value="F:glutamate-5-semialdehyde dehydrogenase activity"/>
    <property type="evidence" value="ECO:0007669"/>
    <property type="project" value="UniProtKB-UniRule"/>
</dbReference>
<dbReference type="GO" id="GO:0050661">
    <property type="term" value="F:NADP binding"/>
    <property type="evidence" value="ECO:0007669"/>
    <property type="project" value="InterPro"/>
</dbReference>
<dbReference type="GO" id="GO:0055129">
    <property type="term" value="P:L-proline biosynthetic process"/>
    <property type="evidence" value="ECO:0007669"/>
    <property type="project" value="UniProtKB-UniRule"/>
</dbReference>
<dbReference type="CDD" id="cd07079">
    <property type="entry name" value="ALDH_F18-19_ProA-GPR"/>
    <property type="match status" value="1"/>
</dbReference>
<dbReference type="Gene3D" id="3.40.605.10">
    <property type="entry name" value="Aldehyde Dehydrogenase, Chain A, domain 1"/>
    <property type="match status" value="1"/>
</dbReference>
<dbReference type="Gene3D" id="3.40.309.10">
    <property type="entry name" value="Aldehyde Dehydrogenase, Chain A, domain 2"/>
    <property type="match status" value="1"/>
</dbReference>
<dbReference type="HAMAP" id="MF_00412">
    <property type="entry name" value="ProA"/>
    <property type="match status" value="1"/>
</dbReference>
<dbReference type="InterPro" id="IPR016161">
    <property type="entry name" value="Ald_DH/histidinol_DH"/>
</dbReference>
<dbReference type="InterPro" id="IPR016163">
    <property type="entry name" value="Ald_DH_C"/>
</dbReference>
<dbReference type="InterPro" id="IPR016162">
    <property type="entry name" value="Ald_DH_N"/>
</dbReference>
<dbReference type="InterPro" id="IPR015590">
    <property type="entry name" value="Aldehyde_DH_dom"/>
</dbReference>
<dbReference type="InterPro" id="IPR020593">
    <property type="entry name" value="G-glutamylP_reductase_CS"/>
</dbReference>
<dbReference type="InterPro" id="IPR012134">
    <property type="entry name" value="Glu-5-SA_DH"/>
</dbReference>
<dbReference type="InterPro" id="IPR000965">
    <property type="entry name" value="GPR_dom"/>
</dbReference>
<dbReference type="NCBIfam" id="NF001221">
    <property type="entry name" value="PRK00197.1"/>
    <property type="match status" value="1"/>
</dbReference>
<dbReference type="NCBIfam" id="TIGR00407">
    <property type="entry name" value="proA"/>
    <property type="match status" value="1"/>
</dbReference>
<dbReference type="PANTHER" id="PTHR11063:SF8">
    <property type="entry name" value="DELTA-1-PYRROLINE-5-CARBOXYLATE SYNTHASE"/>
    <property type="match status" value="1"/>
</dbReference>
<dbReference type="PANTHER" id="PTHR11063">
    <property type="entry name" value="GLUTAMATE SEMIALDEHYDE DEHYDROGENASE"/>
    <property type="match status" value="1"/>
</dbReference>
<dbReference type="Pfam" id="PF00171">
    <property type="entry name" value="Aldedh"/>
    <property type="match status" value="1"/>
</dbReference>
<dbReference type="PIRSF" id="PIRSF000151">
    <property type="entry name" value="GPR"/>
    <property type="match status" value="1"/>
</dbReference>
<dbReference type="SUPFAM" id="SSF53720">
    <property type="entry name" value="ALDH-like"/>
    <property type="match status" value="1"/>
</dbReference>
<dbReference type="PROSITE" id="PS01223">
    <property type="entry name" value="PROA"/>
    <property type="match status" value="1"/>
</dbReference>
<evidence type="ECO:0000255" key="1">
    <source>
        <dbReference type="HAMAP-Rule" id="MF_00412"/>
    </source>
</evidence>
<protein>
    <recommendedName>
        <fullName evidence="1">Gamma-glutamyl phosphate reductase</fullName>
        <shortName evidence="1">GPR</shortName>
        <ecNumber evidence="1">1.2.1.41</ecNumber>
    </recommendedName>
    <alternativeName>
        <fullName evidence="1">Glutamate-5-semialdehyde dehydrogenase</fullName>
    </alternativeName>
    <alternativeName>
        <fullName evidence="1">Glutamyl-gamma-semialdehyde dehydrogenase</fullName>
        <shortName evidence="1">GSA dehydrogenase</shortName>
    </alternativeName>
</protein>
<feature type="chain" id="PRO_0000230020" description="Gamma-glutamyl phosphate reductase">
    <location>
        <begin position="1"/>
        <end position="420"/>
    </location>
</feature>
<proteinExistence type="inferred from homology"/>
<comment type="function">
    <text evidence="1">Catalyzes the NADPH-dependent reduction of L-glutamate 5-phosphate into L-glutamate 5-semialdehyde and phosphate. The product spontaneously undergoes cyclization to form 1-pyrroline-5-carboxylate.</text>
</comment>
<comment type="catalytic activity">
    <reaction evidence="1">
        <text>L-glutamate 5-semialdehyde + phosphate + NADP(+) = L-glutamyl 5-phosphate + NADPH + H(+)</text>
        <dbReference type="Rhea" id="RHEA:19541"/>
        <dbReference type="ChEBI" id="CHEBI:15378"/>
        <dbReference type="ChEBI" id="CHEBI:43474"/>
        <dbReference type="ChEBI" id="CHEBI:57783"/>
        <dbReference type="ChEBI" id="CHEBI:58066"/>
        <dbReference type="ChEBI" id="CHEBI:58274"/>
        <dbReference type="ChEBI" id="CHEBI:58349"/>
        <dbReference type="EC" id="1.2.1.41"/>
    </reaction>
</comment>
<comment type="pathway">
    <text evidence="1">Amino-acid biosynthesis; L-proline biosynthesis; L-glutamate 5-semialdehyde from L-glutamate: step 2/2.</text>
</comment>
<comment type="subcellular location">
    <subcellularLocation>
        <location evidence="1">Cytoplasm</location>
    </subcellularLocation>
</comment>
<comment type="similarity">
    <text evidence="1">Belongs to the gamma-glutamyl phosphate reductase family.</text>
</comment>
<keyword id="KW-0028">Amino-acid biosynthesis</keyword>
<keyword id="KW-0963">Cytoplasm</keyword>
<keyword id="KW-0521">NADP</keyword>
<keyword id="KW-0560">Oxidoreductase</keyword>
<keyword id="KW-0641">Proline biosynthesis</keyword>
<keyword id="KW-1185">Reference proteome</keyword>
<reference key="1">
    <citation type="submission" date="2005-09" db="EMBL/GenBank/DDBJ databases">
        <title>Complete sequence of chromosome 2 of Rhodobacter sphaeroides 2.4.1.</title>
        <authorList>
            <person name="Copeland A."/>
            <person name="Lucas S."/>
            <person name="Lapidus A."/>
            <person name="Barry K."/>
            <person name="Detter J.C."/>
            <person name="Glavina T."/>
            <person name="Hammon N."/>
            <person name="Israni S."/>
            <person name="Pitluck S."/>
            <person name="Richardson P."/>
            <person name="Mackenzie C."/>
            <person name="Choudhary M."/>
            <person name="Larimer F."/>
            <person name="Hauser L.J."/>
            <person name="Land M."/>
            <person name="Donohue T.J."/>
            <person name="Kaplan S."/>
        </authorList>
    </citation>
    <scope>NUCLEOTIDE SEQUENCE [LARGE SCALE GENOMIC DNA]</scope>
    <source>
        <strain>ATCC 17023 / DSM 158 / JCM 6121 / CCUG 31486 / LMG 2827 / NBRC 12203 / NCIMB 8253 / ATH 2.4.1.</strain>
    </source>
</reference>
<accession>Q3IXX7</accession>
<organism>
    <name type="scientific">Cereibacter sphaeroides (strain ATCC 17023 / DSM 158 / JCM 6121 / CCUG 31486 / LMG 2827 / NBRC 12203 / NCIMB 8253 / ATH 2.4.1.)</name>
    <name type="common">Rhodobacter sphaeroides</name>
    <dbReference type="NCBI Taxonomy" id="272943"/>
    <lineage>
        <taxon>Bacteria</taxon>
        <taxon>Pseudomonadati</taxon>
        <taxon>Pseudomonadota</taxon>
        <taxon>Alphaproteobacteria</taxon>
        <taxon>Rhodobacterales</taxon>
        <taxon>Paracoccaceae</taxon>
        <taxon>Cereibacter</taxon>
    </lineage>
</organism>
<sequence length="420" mass="44730">MDGTDVTMLMREIGVRARAAAAELAFAEPSRKEEALNAAAEAMLARSDEILEANGRDLAFGAEKGLTPAMMDRLKLDAARIDGIVEGLRAVAGQPDPVGQVIAEWDRPSGLHIRRVRTPLGVVGVIYESRPNVTADAGALCLKSGNAVILRGGSESFHSSGAIHAALQDGLRQAGLPVDAIQRVPTRDRAAVAEMLRMVEHIDVIVPRGGKGLVGLVQAEARVPVFAHLEGICHVYADGEADLEKARRVVLNAKTRRTGICGSAECLLIDRAFLAKHGPVLIEDLLKAGVEVRAEGELAQVPGTVPAQPEDFGREFLDMIIAAKVVDGVDEAIAHIRRYGSSHTESILTENDATAERFFRRLDSAILMRNASTQFADGGEFGMGAEIGIATGKMHARGPVGAEQLTSFKYLVTGDGTIRT</sequence>
<gene>
    <name evidence="1" type="primary">proA</name>
    <name type="ordered locus">RHOS4_30390</name>
    <name type="ORF">RSP_3824</name>
</gene>